<accession>Q7WFD0</accession>
<keyword id="KW-0030">Aminoacyl-tRNA synthetase</keyword>
<keyword id="KW-0067">ATP-binding</keyword>
<keyword id="KW-0963">Cytoplasm</keyword>
<keyword id="KW-0436">Ligase</keyword>
<keyword id="KW-0547">Nucleotide-binding</keyword>
<keyword id="KW-0648">Protein biosynthesis</keyword>
<keyword id="KW-0694">RNA-binding</keyword>
<comment type="function">
    <text evidence="1">Catalyzes the attachment of tyrosine to tRNA(Tyr) in a two-step reaction: tyrosine is first activated by ATP to form Tyr-AMP and then transferred to the acceptor end of tRNA(Tyr).</text>
</comment>
<comment type="catalytic activity">
    <reaction evidence="1">
        <text>tRNA(Tyr) + L-tyrosine + ATP = L-tyrosyl-tRNA(Tyr) + AMP + diphosphate + H(+)</text>
        <dbReference type="Rhea" id="RHEA:10220"/>
        <dbReference type="Rhea" id="RHEA-COMP:9706"/>
        <dbReference type="Rhea" id="RHEA-COMP:9707"/>
        <dbReference type="ChEBI" id="CHEBI:15378"/>
        <dbReference type="ChEBI" id="CHEBI:30616"/>
        <dbReference type="ChEBI" id="CHEBI:33019"/>
        <dbReference type="ChEBI" id="CHEBI:58315"/>
        <dbReference type="ChEBI" id="CHEBI:78442"/>
        <dbReference type="ChEBI" id="CHEBI:78536"/>
        <dbReference type="ChEBI" id="CHEBI:456215"/>
        <dbReference type="EC" id="6.1.1.1"/>
    </reaction>
</comment>
<comment type="subunit">
    <text evidence="1">Homodimer.</text>
</comment>
<comment type="subcellular location">
    <subcellularLocation>
        <location evidence="1">Cytoplasm</location>
    </subcellularLocation>
</comment>
<comment type="similarity">
    <text evidence="1">Belongs to the class-I aminoacyl-tRNA synthetase family. TyrS type 2 subfamily.</text>
</comment>
<evidence type="ECO:0000255" key="1">
    <source>
        <dbReference type="HAMAP-Rule" id="MF_02007"/>
    </source>
</evidence>
<organism>
    <name type="scientific">Bordetella bronchiseptica (strain ATCC BAA-588 / NCTC 13252 / RB50)</name>
    <name type="common">Alcaligenes bronchisepticus</name>
    <dbReference type="NCBI Taxonomy" id="257310"/>
    <lineage>
        <taxon>Bacteria</taxon>
        <taxon>Pseudomonadati</taxon>
        <taxon>Pseudomonadota</taxon>
        <taxon>Betaproteobacteria</taxon>
        <taxon>Burkholderiales</taxon>
        <taxon>Alcaligenaceae</taxon>
        <taxon>Bordetella</taxon>
    </lineage>
</organism>
<feature type="chain" id="PRO_0000236697" description="Tyrosine--tRNA ligase">
    <location>
        <begin position="1"/>
        <end position="409"/>
    </location>
</feature>
<feature type="domain" description="S4 RNA-binding" evidence="1">
    <location>
        <begin position="347"/>
        <end position="407"/>
    </location>
</feature>
<feature type="short sequence motif" description="'HIGH' region">
    <location>
        <begin position="54"/>
        <end position="63"/>
    </location>
</feature>
<feature type="short sequence motif" description="'KMSKS' region">
    <location>
        <begin position="238"/>
        <end position="242"/>
    </location>
</feature>
<feature type="binding site" evidence="1">
    <location>
        <position position="241"/>
    </location>
    <ligand>
        <name>ATP</name>
        <dbReference type="ChEBI" id="CHEBI:30616"/>
    </ligand>
</feature>
<dbReference type="EC" id="6.1.1.1" evidence="1"/>
<dbReference type="EMBL" id="BX640450">
    <property type="protein sequence ID" value="CAE34713.1"/>
    <property type="molecule type" value="Genomic_DNA"/>
</dbReference>
<dbReference type="RefSeq" id="WP_010927105.1">
    <property type="nucleotide sequence ID" value="NC_002927.3"/>
</dbReference>
<dbReference type="SMR" id="Q7WFD0"/>
<dbReference type="KEGG" id="bbr:BB4350"/>
<dbReference type="eggNOG" id="COG0162">
    <property type="taxonomic scope" value="Bacteria"/>
</dbReference>
<dbReference type="HOGENOM" id="CLU_024003_5_0_4"/>
<dbReference type="Proteomes" id="UP000001027">
    <property type="component" value="Chromosome"/>
</dbReference>
<dbReference type="GO" id="GO:0005829">
    <property type="term" value="C:cytosol"/>
    <property type="evidence" value="ECO:0007669"/>
    <property type="project" value="TreeGrafter"/>
</dbReference>
<dbReference type="GO" id="GO:0005524">
    <property type="term" value="F:ATP binding"/>
    <property type="evidence" value="ECO:0007669"/>
    <property type="project" value="UniProtKB-UniRule"/>
</dbReference>
<dbReference type="GO" id="GO:0003723">
    <property type="term" value="F:RNA binding"/>
    <property type="evidence" value="ECO:0007669"/>
    <property type="project" value="UniProtKB-KW"/>
</dbReference>
<dbReference type="GO" id="GO:0004831">
    <property type="term" value="F:tyrosine-tRNA ligase activity"/>
    <property type="evidence" value="ECO:0007669"/>
    <property type="project" value="UniProtKB-UniRule"/>
</dbReference>
<dbReference type="GO" id="GO:0006437">
    <property type="term" value="P:tyrosyl-tRNA aminoacylation"/>
    <property type="evidence" value="ECO:0007669"/>
    <property type="project" value="UniProtKB-UniRule"/>
</dbReference>
<dbReference type="CDD" id="cd00165">
    <property type="entry name" value="S4"/>
    <property type="match status" value="1"/>
</dbReference>
<dbReference type="CDD" id="cd00805">
    <property type="entry name" value="TyrRS_core"/>
    <property type="match status" value="1"/>
</dbReference>
<dbReference type="FunFam" id="1.10.240.10:FF:000006">
    <property type="entry name" value="Tyrosine--tRNA ligase"/>
    <property type="match status" value="1"/>
</dbReference>
<dbReference type="FunFam" id="3.40.50.620:FF:000061">
    <property type="entry name" value="Tyrosine--tRNA ligase"/>
    <property type="match status" value="1"/>
</dbReference>
<dbReference type="Gene3D" id="3.40.50.620">
    <property type="entry name" value="HUPs"/>
    <property type="match status" value="1"/>
</dbReference>
<dbReference type="Gene3D" id="3.10.290.10">
    <property type="entry name" value="RNA-binding S4 domain"/>
    <property type="match status" value="1"/>
</dbReference>
<dbReference type="Gene3D" id="1.10.240.10">
    <property type="entry name" value="Tyrosyl-Transfer RNA Synthetase"/>
    <property type="match status" value="1"/>
</dbReference>
<dbReference type="HAMAP" id="MF_02007">
    <property type="entry name" value="Tyr_tRNA_synth_type2"/>
    <property type="match status" value="1"/>
</dbReference>
<dbReference type="InterPro" id="IPR001412">
    <property type="entry name" value="aa-tRNA-synth_I_CS"/>
</dbReference>
<dbReference type="InterPro" id="IPR002305">
    <property type="entry name" value="aa-tRNA-synth_Ic"/>
</dbReference>
<dbReference type="InterPro" id="IPR014729">
    <property type="entry name" value="Rossmann-like_a/b/a_fold"/>
</dbReference>
<dbReference type="InterPro" id="IPR002942">
    <property type="entry name" value="S4_RNA-bd"/>
</dbReference>
<dbReference type="InterPro" id="IPR036986">
    <property type="entry name" value="S4_RNA-bd_sf"/>
</dbReference>
<dbReference type="InterPro" id="IPR054608">
    <property type="entry name" value="SYY-like_C"/>
</dbReference>
<dbReference type="InterPro" id="IPR002307">
    <property type="entry name" value="Tyr-tRNA-ligase"/>
</dbReference>
<dbReference type="InterPro" id="IPR024088">
    <property type="entry name" value="Tyr-tRNA-ligase_bac-type"/>
</dbReference>
<dbReference type="InterPro" id="IPR024108">
    <property type="entry name" value="Tyr-tRNA-ligase_bac_2"/>
</dbReference>
<dbReference type="NCBIfam" id="TIGR00234">
    <property type="entry name" value="tyrS"/>
    <property type="match status" value="1"/>
</dbReference>
<dbReference type="PANTHER" id="PTHR11766:SF1">
    <property type="entry name" value="TYROSINE--TRNA LIGASE"/>
    <property type="match status" value="1"/>
</dbReference>
<dbReference type="PANTHER" id="PTHR11766">
    <property type="entry name" value="TYROSYL-TRNA SYNTHETASE"/>
    <property type="match status" value="1"/>
</dbReference>
<dbReference type="Pfam" id="PF22421">
    <property type="entry name" value="SYY_C-terminal"/>
    <property type="match status" value="1"/>
</dbReference>
<dbReference type="Pfam" id="PF00579">
    <property type="entry name" value="tRNA-synt_1b"/>
    <property type="match status" value="1"/>
</dbReference>
<dbReference type="PRINTS" id="PR01040">
    <property type="entry name" value="TRNASYNTHTYR"/>
</dbReference>
<dbReference type="SMART" id="SM00363">
    <property type="entry name" value="S4"/>
    <property type="match status" value="1"/>
</dbReference>
<dbReference type="SUPFAM" id="SSF55174">
    <property type="entry name" value="Alpha-L RNA-binding motif"/>
    <property type="match status" value="1"/>
</dbReference>
<dbReference type="SUPFAM" id="SSF52374">
    <property type="entry name" value="Nucleotidylyl transferase"/>
    <property type="match status" value="1"/>
</dbReference>
<dbReference type="PROSITE" id="PS00178">
    <property type="entry name" value="AA_TRNA_LIGASE_I"/>
    <property type="match status" value="1"/>
</dbReference>
<dbReference type="PROSITE" id="PS50889">
    <property type="entry name" value="S4"/>
    <property type="match status" value="1"/>
</dbReference>
<proteinExistence type="inferred from homology"/>
<gene>
    <name evidence="1" type="primary">tyrS</name>
    <name type="ordered locus">BB4350</name>
</gene>
<reference key="1">
    <citation type="journal article" date="2003" name="Nat. Genet.">
        <title>Comparative analysis of the genome sequences of Bordetella pertussis, Bordetella parapertussis and Bordetella bronchiseptica.</title>
        <authorList>
            <person name="Parkhill J."/>
            <person name="Sebaihia M."/>
            <person name="Preston A."/>
            <person name="Murphy L.D."/>
            <person name="Thomson N.R."/>
            <person name="Harris D.E."/>
            <person name="Holden M.T.G."/>
            <person name="Churcher C.M."/>
            <person name="Bentley S.D."/>
            <person name="Mungall K.L."/>
            <person name="Cerdeno-Tarraga A.-M."/>
            <person name="Temple L."/>
            <person name="James K.D."/>
            <person name="Harris B."/>
            <person name="Quail M.A."/>
            <person name="Achtman M."/>
            <person name="Atkin R."/>
            <person name="Baker S."/>
            <person name="Basham D."/>
            <person name="Bason N."/>
            <person name="Cherevach I."/>
            <person name="Chillingworth T."/>
            <person name="Collins M."/>
            <person name="Cronin A."/>
            <person name="Davis P."/>
            <person name="Doggett J."/>
            <person name="Feltwell T."/>
            <person name="Goble A."/>
            <person name="Hamlin N."/>
            <person name="Hauser H."/>
            <person name="Holroyd S."/>
            <person name="Jagels K."/>
            <person name="Leather S."/>
            <person name="Moule S."/>
            <person name="Norberczak H."/>
            <person name="O'Neil S."/>
            <person name="Ormond D."/>
            <person name="Price C."/>
            <person name="Rabbinowitsch E."/>
            <person name="Rutter S."/>
            <person name="Sanders M."/>
            <person name="Saunders D."/>
            <person name="Seeger K."/>
            <person name="Sharp S."/>
            <person name="Simmonds M."/>
            <person name="Skelton J."/>
            <person name="Squares R."/>
            <person name="Squares S."/>
            <person name="Stevens K."/>
            <person name="Unwin L."/>
            <person name="Whitehead S."/>
            <person name="Barrell B.G."/>
            <person name="Maskell D.J."/>
        </authorList>
    </citation>
    <scope>NUCLEOTIDE SEQUENCE [LARGE SCALE GENOMIC DNA]</scope>
    <source>
        <strain>ATCC BAA-588 / NCTC 13252 / RB50</strain>
    </source>
</reference>
<name>SYY_BORBR</name>
<sequence length="409" mass="44916">MSHPEAPITPEVEADLAIARRGCDELLVESEFARKLACSRATGVPLRIKLGLDPTAPDIHLGHTVVLNKMRQLQDLGHNVIFLIGDFTSTIGDPSGRNSTRPPLTREQIETNAKTYYAQASLVLDPARTEIRYNSEWCDPLGARGMIQLASRYTVARMMEREDFTRRFKGGVPIAVHEFLYPLLQGYDSVALKADLELGGTDQKFNLLVGRELQKEYGQEQQCILTMPLLVGTDGVEKMSKSKGNYIGISEAPESMFGKLMSISDTLMWRYYELLSFRSLADIAALKAEIDGGRNPRDAKVALAQEIVARFHSPQAAEAALAAFEARFRDGAIPEDMPEVTVGGAPQGILRILREAGLVASGSEAQRNVEQGGVRVNGDRVEDKSLQLSAGTYVVQVGKRKFARVKLVG</sequence>
<protein>
    <recommendedName>
        <fullName evidence="1">Tyrosine--tRNA ligase</fullName>
        <ecNumber evidence="1">6.1.1.1</ecNumber>
    </recommendedName>
    <alternativeName>
        <fullName evidence="1">Tyrosyl-tRNA synthetase</fullName>
        <shortName evidence="1">TyrRS</shortName>
    </alternativeName>
</protein>